<keyword id="KW-0131">Cell cycle</keyword>
<keyword id="KW-0132">Cell division</keyword>
<keyword id="KW-0159">Chromosome partition</keyword>
<keyword id="KW-0963">Cytoplasm</keyword>
<keyword id="KW-0229">DNA integration</keyword>
<keyword id="KW-0233">DNA recombination</keyword>
<keyword id="KW-0238">DNA-binding</keyword>
<sequence length="299" mass="33854">MKRQLEAYCAHLRNERQVSEHTLLGYRRDLEKVIAYCKEHGIAEWQALQIQQLRQLIARLHHHGQSPRSLARLLSAVRGLYRYLNREGLCQHDPATGLSAPKGERRLPKVLDTDRALQLLDGGVDDDFIARRDQAILELFYSSGLRLSELTNLDLDHLDLAAGLVQVLGKGGKARVLPVGRKAREALQAWYRLRGIGNPRDRAVFITRQGNRISPQAVRLRVKAAGERELGQHLHPHMLRHSFASHVLESSQDLRAVQEMLGHADISTTQIYTHLDFQHLAAVYDSAHPRAKRSKGTDS</sequence>
<gene>
    <name evidence="1" type="primary">xerC</name>
    <name type="ordered locus">Pput_5139</name>
</gene>
<evidence type="ECO:0000255" key="1">
    <source>
        <dbReference type="HAMAP-Rule" id="MF_01808"/>
    </source>
</evidence>
<evidence type="ECO:0000255" key="2">
    <source>
        <dbReference type="PROSITE-ProRule" id="PRU01246"/>
    </source>
</evidence>
<evidence type="ECO:0000255" key="3">
    <source>
        <dbReference type="PROSITE-ProRule" id="PRU01248"/>
    </source>
</evidence>
<protein>
    <recommendedName>
        <fullName evidence="1">Tyrosine recombinase XerC</fullName>
    </recommendedName>
</protein>
<reference key="1">
    <citation type="submission" date="2007-05" db="EMBL/GenBank/DDBJ databases">
        <title>Complete sequence of Pseudomonas putida F1.</title>
        <authorList>
            <consortium name="US DOE Joint Genome Institute"/>
            <person name="Copeland A."/>
            <person name="Lucas S."/>
            <person name="Lapidus A."/>
            <person name="Barry K."/>
            <person name="Detter J.C."/>
            <person name="Glavina del Rio T."/>
            <person name="Hammon N."/>
            <person name="Israni S."/>
            <person name="Dalin E."/>
            <person name="Tice H."/>
            <person name="Pitluck S."/>
            <person name="Chain P."/>
            <person name="Malfatti S."/>
            <person name="Shin M."/>
            <person name="Vergez L."/>
            <person name="Schmutz J."/>
            <person name="Larimer F."/>
            <person name="Land M."/>
            <person name="Hauser L."/>
            <person name="Kyrpides N."/>
            <person name="Lykidis A."/>
            <person name="Parales R."/>
            <person name="Richardson P."/>
        </authorList>
    </citation>
    <scope>NUCLEOTIDE SEQUENCE [LARGE SCALE GENOMIC DNA]</scope>
    <source>
        <strain>ATCC 700007 / DSM 6899 / JCM 31910 / BCRC 17059 / LMG 24140 / F1</strain>
    </source>
</reference>
<comment type="function">
    <text evidence="1">Site-specific tyrosine recombinase, which acts by catalyzing the cutting and rejoining of the recombining DNA molecules. The XerC-XerD complex is essential to convert dimers of the bacterial chromosome into monomers to permit their segregation at cell division. It also contributes to the segregational stability of plasmids.</text>
</comment>
<comment type="subunit">
    <text evidence="1">Forms a cyclic heterotetrameric complex composed of two molecules of XerC and two molecules of XerD.</text>
</comment>
<comment type="subcellular location">
    <subcellularLocation>
        <location evidence="1">Cytoplasm</location>
    </subcellularLocation>
</comment>
<comment type="similarity">
    <text evidence="1">Belongs to the 'phage' integrase family. XerC subfamily.</text>
</comment>
<accession>A5WAU7</accession>
<organism>
    <name type="scientific">Pseudomonas putida (strain ATCC 700007 / DSM 6899 / JCM 31910 / BCRC 17059 / LMG 24140 / F1)</name>
    <dbReference type="NCBI Taxonomy" id="351746"/>
    <lineage>
        <taxon>Bacteria</taxon>
        <taxon>Pseudomonadati</taxon>
        <taxon>Pseudomonadota</taxon>
        <taxon>Gammaproteobacteria</taxon>
        <taxon>Pseudomonadales</taxon>
        <taxon>Pseudomonadaceae</taxon>
        <taxon>Pseudomonas</taxon>
    </lineage>
</organism>
<feature type="chain" id="PRO_1000070028" description="Tyrosine recombinase XerC">
    <location>
        <begin position="1"/>
        <end position="299"/>
    </location>
</feature>
<feature type="domain" description="Core-binding (CB)" evidence="3">
    <location>
        <begin position="1"/>
        <end position="85"/>
    </location>
</feature>
<feature type="domain" description="Tyr recombinase" evidence="2">
    <location>
        <begin position="106"/>
        <end position="285"/>
    </location>
</feature>
<feature type="active site" evidence="1">
    <location>
        <position position="146"/>
    </location>
</feature>
<feature type="active site" evidence="1">
    <location>
        <position position="170"/>
    </location>
</feature>
<feature type="active site" evidence="1">
    <location>
        <position position="237"/>
    </location>
</feature>
<feature type="active site" evidence="1">
    <location>
        <position position="240"/>
    </location>
</feature>
<feature type="active site" evidence="1">
    <location>
        <position position="263"/>
    </location>
</feature>
<feature type="active site" description="O-(3'-phospho-DNA)-tyrosine intermediate" evidence="1">
    <location>
        <position position="272"/>
    </location>
</feature>
<name>XERC_PSEP1</name>
<proteinExistence type="inferred from homology"/>
<dbReference type="EMBL" id="CP000712">
    <property type="protein sequence ID" value="ABQ81257.1"/>
    <property type="molecule type" value="Genomic_DNA"/>
</dbReference>
<dbReference type="SMR" id="A5WAU7"/>
<dbReference type="KEGG" id="ppf:Pput_5139"/>
<dbReference type="eggNOG" id="COG4973">
    <property type="taxonomic scope" value="Bacteria"/>
</dbReference>
<dbReference type="HOGENOM" id="CLU_027562_9_0_6"/>
<dbReference type="GO" id="GO:0005737">
    <property type="term" value="C:cytoplasm"/>
    <property type="evidence" value="ECO:0007669"/>
    <property type="project" value="UniProtKB-SubCell"/>
</dbReference>
<dbReference type="GO" id="GO:0003677">
    <property type="term" value="F:DNA binding"/>
    <property type="evidence" value="ECO:0007669"/>
    <property type="project" value="UniProtKB-KW"/>
</dbReference>
<dbReference type="GO" id="GO:0009037">
    <property type="term" value="F:tyrosine-based site-specific recombinase activity"/>
    <property type="evidence" value="ECO:0007669"/>
    <property type="project" value="UniProtKB-UniRule"/>
</dbReference>
<dbReference type="GO" id="GO:0051301">
    <property type="term" value="P:cell division"/>
    <property type="evidence" value="ECO:0007669"/>
    <property type="project" value="UniProtKB-KW"/>
</dbReference>
<dbReference type="GO" id="GO:0007059">
    <property type="term" value="P:chromosome segregation"/>
    <property type="evidence" value="ECO:0007669"/>
    <property type="project" value="UniProtKB-UniRule"/>
</dbReference>
<dbReference type="GO" id="GO:0006313">
    <property type="term" value="P:DNA transposition"/>
    <property type="evidence" value="ECO:0007669"/>
    <property type="project" value="UniProtKB-UniRule"/>
</dbReference>
<dbReference type="CDD" id="cd00798">
    <property type="entry name" value="INT_XerDC_C"/>
    <property type="match status" value="1"/>
</dbReference>
<dbReference type="Gene3D" id="1.10.150.130">
    <property type="match status" value="1"/>
</dbReference>
<dbReference type="Gene3D" id="1.10.443.10">
    <property type="entry name" value="Intergrase catalytic core"/>
    <property type="match status" value="1"/>
</dbReference>
<dbReference type="HAMAP" id="MF_01808">
    <property type="entry name" value="Recomb_XerC_XerD"/>
    <property type="match status" value="1"/>
</dbReference>
<dbReference type="InterPro" id="IPR044068">
    <property type="entry name" value="CB"/>
</dbReference>
<dbReference type="InterPro" id="IPR011010">
    <property type="entry name" value="DNA_brk_join_enz"/>
</dbReference>
<dbReference type="InterPro" id="IPR013762">
    <property type="entry name" value="Integrase-like_cat_sf"/>
</dbReference>
<dbReference type="InterPro" id="IPR002104">
    <property type="entry name" value="Integrase_catalytic"/>
</dbReference>
<dbReference type="InterPro" id="IPR010998">
    <property type="entry name" value="Integrase_recombinase_N"/>
</dbReference>
<dbReference type="InterPro" id="IPR004107">
    <property type="entry name" value="Integrase_SAM-like_N"/>
</dbReference>
<dbReference type="InterPro" id="IPR011931">
    <property type="entry name" value="Recomb_XerC"/>
</dbReference>
<dbReference type="InterPro" id="IPR023009">
    <property type="entry name" value="Tyrosine_recombinase_XerC/XerD"/>
</dbReference>
<dbReference type="InterPro" id="IPR050090">
    <property type="entry name" value="Tyrosine_recombinase_XerCD"/>
</dbReference>
<dbReference type="NCBIfam" id="NF001399">
    <property type="entry name" value="PRK00283.1"/>
    <property type="match status" value="1"/>
</dbReference>
<dbReference type="NCBIfam" id="TIGR02224">
    <property type="entry name" value="recomb_XerC"/>
    <property type="match status" value="1"/>
</dbReference>
<dbReference type="PANTHER" id="PTHR30349">
    <property type="entry name" value="PHAGE INTEGRASE-RELATED"/>
    <property type="match status" value="1"/>
</dbReference>
<dbReference type="PANTHER" id="PTHR30349:SF81">
    <property type="entry name" value="TYROSINE RECOMBINASE XERC"/>
    <property type="match status" value="1"/>
</dbReference>
<dbReference type="Pfam" id="PF02899">
    <property type="entry name" value="Phage_int_SAM_1"/>
    <property type="match status" value="1"/>
</dbReference>
<dbReference type="Pfam" id="PF00589">
    <property type="entry name" value="Phage_integrase"/>
    <property type="match status" value="1"/>
</dbReference>
<dbReference type="SUPFAM" id="SSF56349">
    <property type="entry name" value="DNA breaking-rejoining enzymes"/>
    <property type="match status" value="1"/>
</dbReference>
<dbReference type="SUPFAM" id="SSF47823">
    <property type="entry name" value="lambda integrase-like, N-terminal domain"/>
    <property type="match status" value="1"/>
</dbReference>
<dbReference type="PROSITE" id="PS51900">
    <property type="entry name" value="CB"/>
    <property type="match status" value="1"/>
</dbReference>
<dbReference type="PROSITE" id="PS51898">
    <property type="entry name" value="TYR_RECOMBINASE"/>
    <property type="match status" value="1"/>
</dbReference>